<proteinExistence type="evidence at protein level"/>
<gene>
    <name evidence="3" type="primary">lgoX</name>
</gene>
<name>LGOX_STRDA</name>
<organism>
    <name type="scientific">Streptomyces diastatochromogenes</name>
    <dbReference type="NCBI Taxonomy" id="42236"/>
    <lineage>
        <taxon>Bacteria</taxon>
        <taxon>Bacillati</taxon>
        <taxon>Actinomycetota</taxon>
        <taxon>Actinomycetes</taxon>
        <taxon>Kitasatosporales</taxon>
        <taxon>Streptomycetaceae</taxon>
        <taxon>Streptomyces</taxon>
    </lineage>
</organism>
<reference key="1">
    <citation type="journal article" date="2017" name="Biotechnol. Lett.">
        <title>Isolation and characterization of a novel L-glutamate oxidase with strict substrate specificity from Streptomyces diastatochromogenes.</title>
        <authorList>
            <person name="Wang L."/>
            <person name="Peng R."/>
            <person name="Tian Y."/>
            <person name="Liu M."/>
            <person name="Yao Q."/>
        </authorList>
    </citation>
    <scope>NUCLEOTIDE SEQUENCE [GENOMIC DNA]</scope>
    <scope>FUNCTION</scope>
    <scope>CATALYTIC ACTIVITY</scope>
    <scope>ACTIVITY REGULATION</scope>
    <scope>BIOPHYSICOCHEMICAL PROPERTIES</scope>
    <source>
        <strain>S100</strain>
    </source>
</reference>
<comment type="function">
    <text evidence="2">Catalyzes the oxidative deamination of L-glutamate to 2-ketoglutarate along with the production of ammonia and hydrogen peroxide (PubMed:27999974). Exhibits strict specificity for L-glutamate, and shows only very weak activity with L-glutamine (PubMed:27999974).</text>
</comment>
<comment type="catalytic activity">
    <reaction evidence="2">
        <text>L-glutamate + O2 + H2O = H2O2 + 2-oxoglutarate + NH4(+)</text>
        <dbReference type="Rhea" id="RHEA:20728"/>
        <dbReference type="ChEBI" id="CHEBI:15377"/>
        <dbReference type="ChEBI" id="CHEBI:15379"/>
        <dbReference type="ChEBI" id="CHEBI:16240"/>
        <dbReference type="ChEBI" id="CHEBI:16810"/>
        <dbReference type="ChEBI" id="CHEBI:28938"/>
        <dbReference type="ChEBI" id="CHEBI:29985"/>
        <dbReference type="EC" id="1.4.3.11"/>
    </reaction>
</comment>
<comment type="cofactor">
    <cofactor evidence="1">
        <name>FAD</name>
        <dbReference type="ChEBI" id="CHEBI:57692"/>
    </cofactor>
</comment>
<comment type="activity regulation">
    <text evidence="2">Proteinase K-treated enzyme exhibits improved affinity for the substrate, increased activity and increased thermostability.</text>
</comment>
<comment type="biophysicochemical properties">
    <kinetics>
        <KM evidence="2">0.66 mM for L-glutamate (for recombinant LGox)</KM>
        <KM evidence="2">0.15 mM for L-glutamate (for proteinase K-treated recombinant LGox)</KM>
        <Vmax evidence="2">42.0 umol/min/mg enzyme (for recombinant LGox)</Vmax>
        <Vmax evidence="2">62.0 umol/min/mg enzyme (for proteinase K-treated recombinant LGox)</Vmax>
    </kinetics>
    <phDependence>
        <text evidence="2">Optimum pH is 7.5 for recombinant LGox (PubMed:27999974). Optimum pH is 7-8.5 for proteinase K-treated recombinant LGox (PubMed:27999974).</text>
    </phDependence>
    <temperatureDependence>
        <text evidence="2">Optimum temperature is 40 degrees Celsius for both recombinant LGox and proteinase K-treated recombinant LGox.</text>
    </temperatureDependence>
</comment>
<comment type="subunit">
    <text evidence="5">The mature enzyme is a heterohexamer composed of 2 alpha chains, 2 beta chains and 2 gamma chains (alpha2beta2gamma2).</text>
</comment>
<comment type="subcellular location">
    <subcellularLocation>
        <location evidence="1">Secreted</location>
    </subcellularLocation>
</comment>
<comment type="PTM">
    <text evidence="5">The precursor form is proteolytically cleaved by an endopeptidase into alpha, beta and gamma chains, which form the stable mature enzyme.</text>
</comment>
<comment type="miscellaneous">
    <text evidence="2">The recombinant LGox was digested to three fragments (alpha, beta and gamma) by proteinase K.</text>
</comment>
<comment type="similarity">
    <text evidence="4">Belongs to the flavin monoamine oxidase family. LGOX subfamily.</text>
</comment>
<evidence type="ECO:0000250" key="1">
    <source>
        <dbReference type="UniProtKB" id="Q8L3C7"/>
    </source>
</evidence>
<evidence type="ECO:0000269" key="2">
    <source>
    </source>
</evidence>
<evidence type="ECO:0000303" key="3">
    <source>
    </source>
</evidence>
<evidence type="ECO:0000305" key="4"/>
<evidence type="ECO:0000305" key="5">
    <source>
    </source>
</evidence>
<keyword id="KW-0274">FAD</keyword>
<keyword id="KW-0285">Flavoprotein</keyword>
<keyword id="KW-0547">Nucleotide-binding</keyword>
<keyword id="KW-0560">Oxidoreductase</keyword>
<keyword id="KW-0964">Secreted</keyword>
<keyword id="KW-0732">Signal</keyword>
<keyword id="KW-0865">Zymogen</keyword>
<accession>A0A1B1PF34</accession>
<sequence>MTETPRDNSATRARWQTCLKLARELLLVGPDDKDLKLSYLHTLIDTGRLGPTHHPRKKILVIGAGITGLVAGRLLKDAGYDVTIIEANESRVGGRIKTFRATKHHQPFDDAAQYAEAGAMRLPDFHPLVLALVDKLGLGRRQFYNVDVGPSTGSGPEVPVPPVTYTSFTGQTWTNGDDSPDFREPDKRGNSWIRANRVQVRRADYTASPERINEGFHLTGDEVRAPVVKMVDDALESVRDYYSDVVDGKRVNKPFDEWVEGWARVIRDFDGYSMGGFLRDHAGLSDEAIEAVGTLENTSSRLHLSFFHSFLSRSDINPTVRYWEIPGGSWRLPHALHEGLRDEVRLGHRMIRLEYHDPSRDADPEGTAVGPDGWGVTVETVAENDPQAPPRRWTADLAIVTIPFSALRFVEIVPSMSYKKRRAIVETHYDSATKVLLEFSHRWWEFTEDDWREELERIAPGVYEYYRLGPEAAGEPARMPTLAEADAGLLGAAVKDSGVTEEMRQIGSTMPLRGPALRPATHSFGGGSATDNPNRFMYYPSHRVEGSTGGVVLASYSWSDDAARWDSMRSAERYVYALRNLQALHGRRIEVFFTGRGATKSWARDPYAFGEAAIYTAHQMTSFHLDASRPEGPVHFAGEHTSLKHAWIEGALEVHTA</sequence>
<protein>
    <recommendedName>
        <fullName evidence="3">L-glutamate oxidase precursor</fullName>
        <shortName evidence="3">LGox</shortName>
        <ecNumber evidence="2">1.4.3.11</ecNumber>
    </recommendedName>
    <component>
        <recommendedName>
            <fullName evidence="5">L-glutamate oxidase alpha chain</fullName>
        </recommendedName>
    </component>
    <component>
        <recommendedName>
            <fullName evidence="5">L-glutamate oxidase gamma chain</fullName>
        </recommendedName>
    </component>
    <component>
        <recommendedName>
            <fullName evidence="5">L-glutamate oxidase beta chain</fullName>
        </recommendedName>
    </component>
</protein>
<dbReference type="EC" id="1.4.3.11" evidence="2"/>
<dbReference type="EMBL" id="KU522457">
    <property type="protein sequence ID" value="ANT45955.1"/>
    <property type="molecule type" value="Genomic_DNA"/>
</dbReference>
<dbReference type="SMR" id="A0A1B1PF34"/>
<dbReference type="BRENDA" id="1.4.3.11">
    <property type="organism ID" value="6005"/>
</dbReference>
<dbReference type="GO" id="GO:0005576">
    <property type="term" value="C:extracellular region"/>
    <property type="evidence" value="ECO:0007669"/>
    <property type="project" value="UniProtKB-SubCell"/>
</dbReference>
<dbReference type="GO" id="GO:0050025">
    <property type="term" value="F:L-glutamate oxidase activity"/>
    <property type="evidence" value="ECO:0007669"/>
    <property type="project" value="UniProtKB-EC"/>
</dbReference>
<dbReference type="GO" id="GO:0000166">
    <property type="term" value="F:nucleotide binding"/>
    <property type="evidence" value="ECO:0007669"/>
    <property type="project" value="UniProtKB-KW"/>
</dbReference>
<dbReference type="GO" id="GO:0009063">
    <property type="term" value="P:amino acid catabolic process"/>
    <property type="evidence" value="ECO:0007669"/>
    <property type="project" value="TreeGrafter"/>
</dbReference>
<dbReference type="Gene3D" id="1.10.10.1620">
    <property type="match status" value="1"/>
</dbReference>
<dbReference type="Gene3D" id="1.10.10.1790">
    <property type="match status" value="1"/>
</dbReference>
<dbReference type="Gene3D" id="3.30.1490.470">
    <property type="match status" value="1"/>
</dbReference>
<dbReference type="Gene3D" id="3.30.70.2100">
    <property type="match status" value="1"/>
</dbReference>
<dbReference type="Gene3D" id="6.10.140.1210">
    <property type="match status" value="1"/>
</dbReference>
<dbReference type="Gene3D" id="6.10.250.1500">
    <property type="match status" value="1"/>
</dbReference>
<dbReference type="Gene3D" id="3.50.50.60">
    <property type="entry name" value="FAD/NAD(P)-binding domain"/>
    <property type="match status" value="1"/>
</dbReference>
<dbReference type="Gene3D" id="1.10.405.10">
    <property type="entry name" value="Guanine Nucleotide Dissociation Inhibitor, domain 1"/>
    <property type="match status" value="1"/>
</dbReference>
<dbReference type="InterPro" id="IPR002937">
    <property type="entry name" value="Amino_oxidase"/>
</dbReference>
<dbReference type="InterPro" id="IPR036188">
    <property type="entry name" value="FAD/NAD-bd_sf"/>
</dbReference>
<dbReference type="InterPro" id="IPR050281">
    <property type="entry name" value="Flavin_monoamine_oxidase"/>
</dbReference>
<dbReference type="PANTHER" id="PTHR10742:SF342">
    <property type="entry name" value="AMINE OXIDASE"/>
    <property type="match status" value="1"/>
</dbReference>
<dbReference type="PANTHER" id="PTHR10742">
    <property type="entry name" value="FLAVIN MONOAMINE OXIDASE"/>
    <property type="match status" value="1"/>
</dbReference>
<dbReference type="Pfam" id="PF01593">
    <property type="entry name" value="Amino_oxidase"/>
    <property type="match status" value="2"/>
</dbReference>
<dbReference type="SUPFAM" id="SSF54373">
    <property type="entry name" value="FAD-linked reductases, C-terminal domain"/>
    <property type="match status" value="1"/>
</dbReference>
<dbReference type="SUPFAM" id="SSF51905">
    <property type="entry name" value="FAD/NAD(P)-binding domain"/>
    <property type="match status" value="1"/>
</dbReference>
<feature type="signal peptide" evidence="4">
    <location>
        <begin position="1"/>
        <end position="12"/>
    </location>
</feature>
<feature type="chain" id="PRO_0000457959" description="L-glutamate oxidase precursor">
    <location>
        <begin position="13"/>
        <end position="657"/>
    </location>
</feature>
<feature type="chain" id="PRO_0000457960" description="L-glutamate oxidase alpha chain" evidence="4">
    <location>
        <begin position="13"/>
        <end status="unknown"/>
    </location>
</feature>
<feature type="chain" id="PRO_0000457961" description="L-glutamate oxidase gamma chain" evidence="4">
    <location>
        <begin position="388"/>
        <end status="unknown"/>
    </location>
</feature>
<feature type="chain" id="PRO_0000457962" description="L-glutamate oxidase beta chain" evidence="4">
    <location>
        <begin position="514"/>
        <end status="unknown"/>
    </location>
</feature>
<feature type="binding site" evidence="1">
    <location>
        <position position="86"/>
    </location>
    <ligand>
        <name>FAD</name>
        <dbReference type="ChEBI" id="CHEBI:57692"/>
    </ligand>
</feature>
<feature type="binding site" evidence="1">
    <location>
        <position position="87"/>
    </location>
    <ligand>
        <name>FAD</name>
        <dbReference type="ChEBI" id="CHEBI:57692"/>
    </ligand>
</feature>
<feature type="binding site" evidence="1">
    <location>
        <position position="95"/>
    </location>
    <ligand>
        <name>FAD</name>
        <dbReference type="ChEBI" id="CHEBI:57692"/>
    </ligand>
</feature>
<feature type="binding site" evidence="1">
    <location>
        <position position="120"/>
    </location>
    <ligand>
        <name>FAD</name>
        <dbReference type="ChEBI" id="CHEBI:57692"/>
    </ligand>
</feature>
<feature type="binding site" evidence="1">
    <location>
        <position position="121"/>
    </location>
    <ligand>
        <name>FAD</name>
        <dbReference type="ChEBI" id="CHEBI:57692"/>
    </ligand>
</feature>
<feature type="binding site" evidence="1">
    <location>
        <position position="350"/>
    </location>
    <ligand>
        <name>FAD</name>
        <dbReference type="ChEBI" id="CHEBI:57692"/>
    </ligand>
</feature>
<feature type="binding site" evidence="1">
    <location>
        <position position="639"/>
    </location>
    <ligand>
        <name>FAD</name>
        <dbReference type="ChEBI" id="CHEBI:57692"/>
    </ligand>
</feature>
<feature type="binding site" evidence="1">
    <location>
        <position position="647"/>
    </location>
    <ligand>
        <name>FAD</name>
        <dbReference type="ChEBI" id="CHEBI:57692"/>
    </ligand>
</feature>
<feature type="binding site" evidence="1">
    <location>
        <position position="648"/>
    </location>
    <ligand>
        <name>FAD</name>
        <dbReference type="ChEBI" id="CHEBI:57692"/>
    </ligand>
</feature>
<feature type="site" description="Important for substrate specificity" evidence="1">
    <location>
        <position position="301"/>
    </location>
</feature>